<feature type="chain" id="PRO_0000140266" description="Peptide methionine sulfoxide reductase MsrB">
    <location>
        <begin position="1"/>
        <end position="159"/>
    </location>
</feature>
<feature type="domain" description="MsrB" evidence="2">
    <location>
        <begin position="22"/>
        <end position="144"/>
    </location>
</feature>
<feature type="active site" description="Nucleophile" evidence="2">
    <location>
        <position position="133"/>
    </location>
</feature>
<feature type="binding site" evidence="2">
    <location>
        <position position="61"/>
    </location>
    <ligand>
        <name>Zn(2+)</name>
        <dbReference type="ChEBI" id="CHEBI:29105"/>
    </ligand>
</feature>
<feature type="binding site" evidence="2">
    <location>
        <position position="64"/>
    </location>
    <ligand>
        <name>Zn(2+)</name>
        <dbReference type="ChEBI" id="CHEBI:29105"/>
    </ligand>
</feature>
<feature type="binding site" evidence="2">
    <location>
        <position position="110"/>
    </location>
    <ligand>
        <name>Zn(2+)</name>
        <dbReference type="ChEBI" id="CHEBI:29105"/>
    </ligand>
</feature>
<feature type="binding site" evidence="2">
    <location>
        <position position="113"/>
    </location>
    <ligand>
        <name>Zn(2+)</name>
        <dbReference type="ChEBI" id="CHEBI:29105"/>
    </ligand>
</feature>
<organism>
    <name type="scientific">Caulobacter vibrioides (strain ATCC 19089 / CIP 103742 / CB 15)</name>
    <name type="common">Caulobacter crescentus</name>
    <dbReference type="NCBI Taxonomy" id="190650"/>
    <lineage>
        <taxon>Bacteria</taxon>
        <taxon>Pseudomonadati</taxon>
        <taxon>Pseudomonadota</taxon>
        <taxon>Alphaproteobacteria</taxon>
        <taxon>Caulobacterales</taxon>
        <taxon>Caulobacteraceae</taxon>
        <taxon>Caulobacter</taxon>
    </lineage>
</organism>
<evidence type="ECO:0000255" key="1">
    <source>
        <dbReference type="HAMAP-Rule" id="MF_01400"/>
    </source>
</evidence>
<evidence type="ECO:0000255" key="2">
    <source>
        <dbReference type="PROSITE-ProRule" id="PRU01126"/>
    </source>
</evidence>
<accession>Q9A6B1</accession>
<proteinExistence type="inferred from homology"/>
<keyword id="KW-0479">Metal-binding</keyword>
<keyword id="KW-0560">Oxidoreductase</keyword>
<keyword id="KW-1185">Reference proteome</keyword>
<keyword id="KW-0862">Zinc</keyword>
<reference key="1">
    <citation type="journal article" date="2001" name="Proc. Natl. Acad. Sci. U.S.A.">
        <title>Complete genome sequence of Caulobacter crescentus.</title>
        <authorList>
            <person name="Nierman W.C."/>
            <person name="Feldblyum T.V."/>
            <person name="Laub M.T."/>
            <person name="Paulsen I.T."/>
            <person name="Nelson K.E."/>
            <person name="Eisen J.A."/>
            <person name="Heidelberg J.F."/>
            <person name="Alley M.R.K."/>
            <person name="Ohta N."/>
            <person name="Maddock J.R."/>
            <person name="Potocka I."/>
            <person name="Nelson W.C."/>
            <person name="Newton A."/>
            <person name="Stephens C."/>
            <person name="Phadke N.D."/>
            <person name="Ely B."/>
            <person name="DeBoy R.T."/>
            <person name="Dodson R.J."/>
            <person name="Durkin A.S."/>
            <person name="Gwinn M.L."/>
            <person name="Haft D.H."/>
            <person name="Kolonay J.F."/>
            <person name="Smit J."/>
            <person name="Craven M.B."/>
            <person name="Khouri H.M."/>
            <person name="Shetty J."/>
            <person name="Berry K.J."/>
            <person name="Utterback T.R."/>
            <person name="Tran K."/>
            <person name="Wolf A.M."/>
            <person name="Vamathevan J.J."/>
            <person name="Ermolaeva M.D."/>
            <person name="White O."/>
            <person name="Salzberg S.L."/>
            <person name="Venter J.C."/>
            <person name="Shapiro L."/>
            <person name="Fraser C.M."/>
        </authorList>
    </citation>
    <scope>NUCLEOTIDE SEQUENCE [LARGE SCALE GENOMIC DNA]</scope>
    <source>
        <strain>ATCC 19089 / CIP 103742 / CB 15</strain>
    </source>
</reference>
<dbReference type="EC" id="1.8.4.12" evidence="1"/>
<dbReference type="EMBL" id="AE005673">
    <property type="protein sequence ID" value="AAK24154.1"/>
    <property type="molecule type" value="Genomic_DNA"/>
</dbReference>
<dbReference type="PIR" id="F87519">
    <property type="entry name" value="F87519"/>
</dbReference>
<dbReference type="RefSeq" id="NP_420986.1">
    <property type="nucleotide sequence ID" value="NC_002696.2"/>
</dbReference>
<dbReference type="RefSeq" id="WP_010920044.1">
    <property type="nucleotide sequence ID" value="NC_002696.2"/>
</dbReference>
<dbReference type="SMR" id="Q9A6B1"/>
<dbReference type="STRING" id="190650.CC_2183"/>
<dbReference type="EnsemblBacteria" id="AAK24154">
    <property type="protein sequence ID" value="AAK24154"/>
    <property type="gene ID" value="CC_2183"/>
</dbReference>
<dbReference type="KEGG" id="ccr:CC_2183"/>
<dbReference type="PATRIC" id="fig|190650.5.peg.2200"/>
<dbReference type="eggNOG" id="COG0229">
    <property type="taxonomic scope" value="Bacteria"/>
</dbReference>
<dbReference type="HOGENOM" id="CLU_031040_8_5_5"/>
<dbReference type="BioCyc" id="CAULO:CC2183-MONOMER"/>
<dbReference type="Proteomes" id="UP000001816">
    <property type="component" value="Chromosome"/>
</dbReference>
<dbReference type="GO" id="GO:0005737">
    <property type="term" value="C:cytoplasm"/>
    <property type="evidence" value="ECO:0007669"/>
    <property type="project" value="TreeGrafter"/>
</dbReference>
<dbReference type="GO" id="GO:0033743">
    <property type="term" value="F:peptide-methionine (R)-S-oxide reductase activity"/>
    <property type="evidence" value="ECO:0007669"/>
    <property type="project" value="UniProtKB-UniRule"/>
</dbReference>
<dbReference type="GO" id="GO:0008270">
    <property type="term" value="F:zinc ion binding"/>
    <property type="evidence" value="ECO:0007669"/>
    <property type="project" value="UniProtKB-UniRule"/>
</dbReference>
<dbReference type="GO" id="GO:0030091">
    <property type="term" value="P:protein repair"/>
    <property type="evidence" value="ECO:0007669"/>
    <property type="project" value="InterPro"/>
</dbReference>
<dbReference type="GO" id="GO:0006979">
    <property type="term" value="P:response to oxidative stress"/>
    <property type="evidence" value="ECO:0007669"/>
    <property type="project" value="InterPro"/>
</dbReference>
<dbReference type="FunFam" id="2.170.150.20:FF:000001">
    <property type="entry name" value="Peptide methionine sulfoxide reductase MsrB"/>
    <property type="match status" value="1"/>
</dbReference>
<dbReference type="Gene3D" id="2.170.150.20">
    <property type="entry name" value="Peptide methionine sulfoxide reductase"/>
    <property type="match status" value="1"/>
</dbReference>
<dbReference type="HAMAP" id="MF_01400">
    <property type="entry name" value="MsrB"/>
    <property type="match status" value="1"/>
</dbReference>
<dbReference type="InterPro" id="IPR028427">
    <property type="entry name" value="Met_Sox_Rdtase_MsrB"/>
</dbReference>
<dbReference type="InterPro" id="IPR002579">
    <property type="entry name" value="Met_Sox_Rdtase_MsrB_dom"/>
</dbReference>
<dbReference type="InterPro" id="IPR011057">
    <property type="entry name" value="Mss4-like_sf"/>
</dbReference>
<dbReference type="NCBIfam" id="TIGR00357">
    <property type="entry name" value="peptide-methionine (R)-S-oxide reductase MsrB"/>
    <property type="match status" value="1"/>
</dbReference>
<dbReference type="PANTHER" id="PTHR10173">
    <property type="entry name" value="METHIONINE SULFOXIDE REDUCTASE"/>
    <property type="match status" value="1"/>
</dbReference>
<dbReference type="PANTHER" id="PTHR10173:SF52">
    <property type="entry name" value="METHIONINE-R-SULFOXIDE REDUCTASE B1"/>
    <property type="match status" value="1"/>
</dbReference>
<dbReference type="Pfam" id="PF01641">
    <property type="entry name" value="SelR"/>
    <property type="match status" value="1"/>
</dbReference>
<dbReference type="SUPFAM" id="SSF51316">
    <property type="entry name" value="Mss4-like"/>
    <property type="match status" value="1"/>
</dbReference>
<dbReference type="PROSITE" id="PS51790">
    <property type="entry name" value="MSRB"/>
    <property type="match status" value="1"/>
</dbReference>
<protein>
    <recommendedName>
        <fullName evidence="1">Peptide methionine sulfoxide reductase MsrB</fullName>
        <ecNumber evidence="1">1.8.4.12</ecNumber>
    </recommendedName>
    <alternativeName>
        <fullName evidence="1">Peptide-methionine (R)-S-oxide reductase</fullName>
    </alternativeName>
</protein>
<name>MSRB_CAUVC</name>
<comment type="catalytic activity">
    <reaction evidence="1">
        <text>L-methionyl-[protein] + [thioredoxin]-disulfide + H2O = L-methionyl-(R)-S-oxide-[protein] + [thioredoxin]-dithiol</text>
        <dbReference type="Rhea" id="RHEA:24164"/>
        <dbReference type="Rhea" id="RHEA-COMP:10698"/>
        <dbReference type="Rhea" id="RHEA-COMP:10700"/>
        <dbReference type="Rhea" id="RHEA-COMP:12313"/>
        <dbReference type="Rhea" id="RHEA-COMP:12314"/>
        <dbReference type="ChEBI" id="CHEBI:15377"/>
        <dbReference type="ChEBI" id="CHEBI:16044"/>
        <dbReference type="ChEBI" id="CHEBI:29950"/>
        <dbReference type="ChEBI" id="CHEBI:45764"/>
        <dbReference type="ChEBI" id="CHEBI:50058"/>
        <dbReference type="EC" id="1.8.4.12"/>
    </reaction>
</comment>
<comment type="cofactor">
    <cofactor evidence="1">
        <name>Zn(2+)</name>
        <dbReference type="ChEBI" id="CHEBI:29105"/>
    </cofactor>
    <text evidence="1">Binds 1 zinc ion per subunit. The zinc ion is important for the structural integrity of the protein.</text>
</comment>
<comment type="similarity">
    <text evidence="1">Belongs to the MsrB Met sulfoxide reductase family.</text>
</comment>
<sequence length="159" mass="17300">MTDAATLSTAGFDLTPPTEAERERLEANLTAEEARVLLHHGTEAPFCGGLLGEKSPGVYGCRLCGLPLFKHETKFESGTGWPSFYAPFAEDHVVGVRDTSYGMVRIETRCARCDSHQGHVFPDGPAPTRLRYCINSVSLQFVKAGAPLPDPLHRGDKIT</sequence>
<gene>
    <name evidence="1" type="primary">msrB</name>
    <name type="ordered locus">CC_2183</name>
</gene>